<reference key="1">
    <citation type="journal article" date="2011" name="J. Bacteriol.">
        <title>Comparative genomics of 28 Salmonella enterica isolates: evidence for CRISPR-mediated adaptive sublineage evolution.</title>
        <authorList>
            <person name="Fricke W.F."/>
            <person name="Mammel M.K."/>
            <person name="McDermott P.F."/>
            <person name="Tartera C."/>
            <person name="White D.G."/>
            <person name="Leclerc J.E."/>
            <person name="Ravel J."/>
            <person name="Cebula T.A."/>
        </authorList>
    </citation>
    <scope>NUCLEOTIDE SEQUENCE [LARGE SCALE GENOMIC DNA]</scope>
    <source>
        <strain>SL476</strain>
    </source>
</reference>
<proteinExistence type="inferred from homology"/>
<accession>B4TFE3</accession>
<sequence>MAYRDQPLGELALSIPRASALFRQYDMDYCCGGKQTLARAAARHDVDIDIIEAQLAQLAEQPIEKDWRAVPLADIIDHIVVRYHDRHREQLPELILQATKVERVHADKPNVPRGLTKYLTALHEELSSHMMKEEQILFPMIKQGMGRQATGPISVMESEHDEAGELVDVIKHVTQNVTPPPEACTTWKAMYNGINEMIDDLMEHISLENNVLFPRALAGE</sequence>
<evidence type="ECO:0000255" key="1">
    <source>
        <dbReference type="HAMAP-Rule" id="MF_01606"/>
    </source>
</evidence>
<feature type="chain" id="PRO_1000148186" description="Iron-sulfur cluster repair protein YtfE">
    <location>
        <begin position="1"/>
        <end position="220"/>
    </location>
</feature>
<name>YTFE_SALHS</name>
<comment type="function">
    <text evidence="1">Di-iron-containing protein involved in the repair of iron-sulfur clusters damaged by oxidative and nitrosative stress conditions.</text>
</comment>
<comment type="subunit">
    <text evidence="1">Homodimer.</text>
</comment>
<comment type="subcellular location">
    <subcellularLocation>
        <location evidence="1">Cytoplasm</location>
    </subcellularLocation>
</comment>
<comment type="similarity">
    <text evidence="1">Belongs to the RIC family. YtfE subfamily.</text>
</comment>
<dbReference type="EMBL" id="CP001120">
    <property type="protein sequence ID" value="ACF66251.1"/>
    <property type="molecule type" value="Genomic_DNA"/>
</dbReference>
<dbReference type="RefSeq" id="WP_000331471.1">
    <property type="nucleotide sequence ID" value="NC_011083.1"/>
</dbReference>
<dbReference type="SMR" id="B4TFE3"/>
<dbReference type="KEGG" id="seh:SeHA_C4817"/>
<dbReference type="HOGENOM" id="CLU_076075_2_0_6"/>
<dbReference type="Proteomes" id="UP000001866">
    <property type="component" value="Chromosome"/>
</dbReference>
<dbReference type="GO" id="GO:0005737">
    <property type="term" value="C:cytoplasm"/>
    <property type="evidence" value="ECO:0007669"/>
    <property type="project" value="UniProtKB-SubCell"/>
</dbReference>
<dbReference type="GO" id="GO:0046872">
    <property type="term" value="F:metal ion binding"/>
    <property type="evidence" value="ECO:0007669"/>
    <property type="project" value="UniProtKB-KW"/>
</dbReference>
<dbReference type="GO" id="GO:0030091">
    <property type="term" value="P:protein repair"/>
    <property type="evidence" value="ECO:0007669"/>
    <property type="project" value="UniProtKB-UniRule"/>
</dbReference>
<dbReference type="GO" id="GO:0051409">
    <property type="term" value="P:response to nitrosative stress"/>
    <property type="evidence" value="ECO:0007669"/>
    <property type="project" value="UniProtKB-UniRule"/>
</dbReference>
<dbReference type="GO" id="GO:0006979">
    <property type="term" value="P:response to oxidative stress"/>
    <property type="evidence" value="ECO:0007669"/>
    <property type="project" value="UniProtKB-UniRule"/>
</dbReference>
<dbReference type="FunFam" id="1.20.120.520:FF:000001">
    <property type="entry name" value="Iron-sulfur cluster repair protein YtfE"/>
    <property type="match status" value="1"/>
</dbReference>
<dbReference type="Gene3D" id="1.20.120.520">
    <property type="entry name" value="nmb1532 protein domain like"/>
    <property type="match status" value="1"/>
</dbReference>
<dbReference type="HAMAP" id="MF_01606">
    <property type="entry name" value="RIC_YtfE"/>
    <property type="match status" value="1"/>
</dbReference>
<dbReference type="InterPro" id="IPR023742">
    <property type="entry name" value="FeS-repair_YftE"/>
</dbReference>
<dbReference type="InterPro" id="IPR012312">
    <property type="entry name" value="Hemerythrin-like"/>
</dbReference>
<dbReference type="InterPro" id="IPR019903">
    <property type="entry name" value="RIC_family"/>
</dbReference>
<dbReference type="NCBIfam" id="TIGR03652">
    <property type="entry name" value="FeS_repair_RIC"/>
    <property type="match status" value="1"/>
</dbReference>
<dbReference type="NCBIfam" id="NF008221">
    <property type="entry name" value="PRK10992.1"/>
    <property type="match status" value="1"/>
</dbReference>
<dbReference type="PANTHER" id="PTHR36438">
    <property type="entry name" value="IRON-SULFUR CLUSTER REPAIR PROTEIN YTFE"/>
    <property type="match status" value="1"/>
</dbReference>
<dbReference type="PANTHER" id="PTHR36438:SF1">
    <property type="entry name" value="IRON-SULFUR CLUSTER REPAIR PROTEIN YTFE"/>
    <property type="match status" value="1"/>
</dbReference>
<dbReference type="Pfam" id="PF01814">
    <property type="entry name" value="Hemerythrin"/>
    <property type="match status" value="1"/>
</dbReference>
<dbReference type="Pfam" id="PF04405">
    <property type="entry name" value="ScdA_N"/>
    <property type="match status" value="1"/>
</dbReference>
<organism>
    <name type="scientific">Salmonella heidelberg (strain SL476)</name>
    <dbReference type="NCBI Taxonomy" id="454169"/>
    <lineage>
        <taxon>Bacteria</taxon>
        <taxon>Pseudomonadati</taxon>
        <taxon>Pseudomonadota</taxon>
        <taxon>Gammaproteobacteria</taxon>
        <taxon>Enterobacterales</taxon>
        <taxon>Enterobacteriaceae</taxon>
        <taxon>Salmonella</taxon>
    </lineage>
</organism>
<gene>
    <name evidence="1" type="primary">ytfE</name>
    <name type="ordered locus">SeHA_C4817</name>
</gene>
<protein>
    <recommendedName>
        <fullName evidence="1">Iron-sulfur cluster repair protein YtfE</fullName>
    </recommendedName>
</protein>
<keyword id="KW-0963">Cytoplasm</keyword>
<keyword id="KW-0408">Iron</keyword>
<keyword id="KW-0479">Metal-binding</keyword>
<keyword id="KW-0346">Stress response</keyword>